<evidence type="ECO:0000255" key="1">
    <source>
        <dbReference type="HAMAP-Rule" id="MF_01031"/>
    </source>
</evidence>
<name>LEUD_CORDI</name>
<accession>Q6NHK9</accession>
<proteinExistence type="inferred from homology"/>
<protein>
    <recommendedName>
        <fullName evidence="1">3-isopropylmalate dehydratase small subunit</fullName>
        <ecNumber evidence="1">4.2.1.33</ecNumber>
    </recommendedName>
    <alternativeName>
        <fullName evidence="1">Alpha-IPM isomerase</fullName>
        <shortName evidence="1">IPMI</shortName>
    </alternativeName>
    <alternativeName>
        <fullName evidence="1">Isopropylmalate isomerase</fullName>
    </alternativeName>
</protein>
<dbReference type="EC" id="4.2.1.33" evidence="1"/>
<dbReference type="EMBL" id="BX248357">
    <property type="protein sequence ID" value="CAE49648.1"/>
    <property type="molecule type" value="Genomic_DNA"/>
</dbReference>
<dbReference type="RefSeq" id="WP_010934823.1">
    <property type="nucleotide sequence ID" value="NC_002935.2"/>
</dbReference>
<dbReference type="SMR" id="Q6NHK9"/>
<dbReference type="STRING" id="257309.DIP1128"/>
<dbReference type="GeneID" id="29422227"/>
<dbReference type="KEGG" id="cdi:DIP1128"/>
<dbReference type="HOGENOM" id="CLU_081378_0_1_11"/>
<dbReference type="UniPathway" id="UPA00048">
    <property type="reaction ID" value="UER00071"/>
</dbReference>
<dbReference type="Proteomes" id="UP000002198">
    <property type="component" value="Chromosome"/>
</dbReference>
<dbReference type="GO" id="GO:0009316">
    <property type="term" value="C:3-isopropylmalate dehydratase complex"/>
    <property type="evidence" value="ECO:0007669"/>
    <property type="project" value="InterPro"/>
</dbReference>
<dbReference type="GO" id="GO:0003861">
    <property type="term" value="F:3-isopropylmalate dehydratase activity"/>
    <property type="evidence" value="ECO:0007669"/>
    <property type="project" value="UniProtKB-UniRule"/>
</dbReference>
<dbReference type="GO" id="GO:0009098">
    <property type="term" value="P:L-leucine biosynthetic process"/>
    <property type="evidence" value="ECO:0007669"/>
    <property type="project" value="UniProtKB-UniRule"/>
</dbReference>
<dbReference type="CDD" id="cd01577">
    <property type="entry name" value="IPMI_Swivel"/>
    <property type="match status" value="1"/>
</dbReference>
<dbReference type="FunFam" id="3.20.19.10:FF:000003">
    <property type="entry name" value="3-isopropylmalate dehydratase small subunit"/>
    <property type="match status" value="1"/>
</dbReference>
<dbReference type="Gene3D" id="3.20.19.10">
    <property type="entry name" value="Aconitase, domain 4"/>
    <property type="match status" value="1"/>
</dbReference>
<dbReference type="HAMAP" id="MF_01031">
    <property type="entry name" value="LeuD_type1"/>
    <property type="match status" value="1"/>
</dbReference>
<dbReference type="InterPro" id="IPR004431">
    <property type="entry name" value="3-IsopropMal_deHydase_ssu"/>
</dbReference>
<dbReference type="InterPro" id="IPR015928">
    <property type="entry name" value="Aconitase/3IPM_dehydase_swvl"/>
</dbReference>
<dbReference type="InterPro" id="IPR000573">
    <property type="entry name" value="AconitaseA/IPMdHydase_ssu_swvl"/>
</dbReference>
<dbReference type="InterPro" id="IPR033940">
    <property type="entry name" value="IPMI_Swivel"/>
</dbReference>
<dbReference type="InterPro" id="IPR050075">
    <property type="entry name" value="LeuD"/>
</dbReference>
<dbReference type="NCBIfam" id="TIGR00171">
    <property type="entry name" value="leuD"/>
    <property type="match status" value="1"/>
</dbReference>
<dbReference type="NCBIfam" id="NF002458">
    <property type="entry name" value="PRK01641.1"/>
    <property type="match status" value="1"/>
</dbReference>
<dbReference type="PANTHER" id="PTHR43345:SF5">
    <property type="entry name" value="3-ISOPROPYLMALATE DEHYDRATASE SMALL SUBUNIT"/>
    <property type="match status" value="1"/>
</dbReference>
<dbReference type="PANTHER" id="PTHR43345">
    <property type="entry name" value="3-ISOPROPYLMALATE DEHYDRATASE SMALL SUBUNIT 2-RELATED-RELATED"/>
    <property type="match status" value="1"/>
</dbReference>
<dbReference type="Pfam" id="PF00694">
    <property type="entry name" value="Aconitase_C"/>
    <property type="match status" value="1"/>
</dbReference>
<dbReference type="SUPFAM" id="SSF52016">
    <property type="entry name" value="LeuD/IlvD-like"/>
    <property type="match status" value="1"/>
</dbReference>
<organism>
    <name type="scientific">Corynebacterium diphtheriae (strain ATCC 700971 / NCTC 13129 / Biotype gravis)</name>
    <dbReference type="NCBI Taxonomy" id="257309"/>
    <lineage>
        <taxon>Bacteria</taxon>
        <taxon>Bacillati</taxon>
        <taxon>Actinomycetota</taxon>
        <taxon>Actinomycetes</taxon>
        <taxon>Mycobacteriales</taxon>
        <taxon>Corynebacteriaceae</taxon>
        <taxon>Corynebacterium</taxon>
    </lineage>
</organism>
<gene>
    <name evidence="1" type="primary">leuD</name>
    <name type="ordered locus">DIP1128</name>
</gene>
<sequence length="196" mass="21957">MEKFTTHTGVGVPLTRSNVDTDQIIPAVYLKRVTRTGFEDGLFNNWRTKDPNFVLNNEAYRNGSVLVAGPDFGTGSSREHAVWALKDYGFAVVLSSRFADIFRGNAGKAGLLAAQMEQTDIELLWKQLEQTPGAQVTVSLEERTVTCEGNVYPFFVDDYTRWRLMEGLDDVGLTLRKEAEIAAFEARRPSFKPVTQ</sequence>
<comment type="function">
    <text evidence="1">Catalyzes the isomerization between 2-isopropylmalate and 3-isopropylmalate, via the formation of 2-isopropylmaleate.</text>
</comment>
<comment type="catalytic activity">
    <reaction evidence="1">
        <text>(2R,3S)-3-isopropylmalate = (2S)-2-isopropylmalate</text>
        <dbReference type="Rhea" id="RHEA:32287"/>
        <dbReference type="ChEBI" id="CHEBI:1178"/>
        <dbReference type="ChEBI" id="CHEBI:35121"/>
        <dbReference type="EC" id="4.2.1.33"/>
    </reaction>
</comment>
<comment type="pathway">
    <text evidence="1">Amino-acid biosynthesis; L-leucine biosynthesis; L-leucine from 3-methyl-2-oxobutanoate: step 2/4.</text>
</comment>
<comment type="subunit">
    <text evidence="1">Heterodimer of LeuC and LeuD.</text>
</comment>
<comment type="similarity">
    <text evidence="1">Belongs to the LeuD family. LeuD type 1 subfamily.</text>
</comment>
<keyword id="KW-0028">Amino-acid biosynthesis</keyword>
<keyword id="KW-0100">Branched-chain amino acid biosynthesis</keyword>
<keyword id="KW-0432">Leucine biosynthesis</keyword>
<keyword id="KW-0456">Lyase</keyword>
<keyword id="KW-1185">Reference proteome</keyword>
<feature type="chain" id="PRO_0000141813" description="3-isopropylmalate dehydratase small subunit">
    <location>
        <begin position="1"/>
        <end position="196"/>
    </location>
</feature>
<reference key="1">
    <citation type="journal article" date="2003" name="Nucleic Acids Res.">
        <title>The complete genome sequence and analysis of Corynebacterium diphtheriae NCTC13129.</title>
        <authorList>
            <person name="Cerdeno-Tarraga A.-M."/>
            <person name="Efstratiou A."/>
            <person name="Dover L.G."/>
            <person name="Holden M.T.G."/>
            <person name="Pallen M.J."/>
            <person name="Bentley S.D."/>
            <person name="Besra G.S."/>
            <person name="Churcher C.M."/>
            <person name="James K.D."/>
            <person name="De Zoysa A."/>
            <person name="Chillingworth T."/>
            <person name="Cronin A."/>
            <person name="Dowd L."/>
            <person name="Feltwell T."/>
            <person name="Hamlin N."/>
            <person name="Holroyd S."/>
            <person name="Jagels K."/>
            <person name="Moule S."/>
            <person name="Quail M.A."/>
            <person name="Rabbinowitsch E."/>
            <person name="Rutherford K.M."/>
            <person name="Thomson N.R."/>
            <person name="Unwin L."/>
            <person name="Whitehead S."/>
            <person name="Barrell B.G."/>
            <person name="Parkhill J."/>
        </authorList>
    </citation>
    <scope>NUCLEOTIDE SEQUENCE [LARGE SCALE GENOMIC DNA]</scope>
    <source>
        <strain>ATCC 700971 / NCTC 13129 / Biotype gravis</strain>
    </source>
</reference>